<feature type="chain" id="PRO_0000201236" description="BolA-like protein 2">
    <location>
        <begin position="1"/>
        <end position="86"/>
    </location>
</feature>
<feature type="modified residue" description="N-acetylmethionine" evidence="1">
    <location>
        <position position="1"/>
    </location>
</feature>
<feature type="splice variant" id="VSP_010092" description="In isoform 2." evidence="6">
    <original>LVNA</original>
    <variation>FCTE</variation>
    <location>
        <begin position="55"/>
        <end position="58"/>
    </location>
</feature>
<feature type="splice variant" id="VSP_010093" description="In isoform 2." evidence="6">
    <location>
        <begin position="59"/>
        <end position="86"/>
    </location>
</feature>
<reference key="1">
    <citation type="submission" date="1998-04" db="EMBL/GenBank/DDBJ databases">
        <authorList>
            <person name="Mao Y.M."/>
            <person name="Xie Y."/>
            <person name="Huang X.Y."/>
            <person name="Ying K."/>
            <person name="Dai J.L."/>
        </authorList>
    </citation>
    <scope>NUCLEOTIDE SEQUENCE [LARGE SCALE MRNA] (ISOFORM 1)</scope>
    <source>
        <tissue>Fetal brain</tissue>
    </source>
</reference>
<reference key="2">
    <citation type="journal article" date="2004" name="Genome Res.">
        <title>The status, quality, and expansion of the NIH full-length cDNA project: the Mammalian Gene Collection (MGC).</title>
        <authorList>
            <consortium name="The MGC Project Team"/>
        </authorList>
    </citation>
    <scope>NUCLEOTIDE SEQUENCE [LARGE SCALE MRNA] (ISOFORMS 1 AND 2)</scope>
    <source>
        <tissue>Eye</tissue>
        <tissue>Kidney</tissue>
    </source>
</reference>
<reference key="3">
    <citation type="journal article" date="2003" name="Nat. Biotechnol.">
        <title>Exploring proteomes and analyzing protein processing by mass spectrometric identification of sorted N-terminal peptides.</title>
        <authorList>
            <person name="Gevaert K."/>
            <person name="Goethals M."/>
            <person name="Martens L."/>
            <person name="Van Damme J."/>
            <person name="Staes A."/>
            <person name="Thomas G.R."/>
            <person name="Vandekerckhove J."/>
        </authorList>
    </citation>
    <scope>PROTEIN SEQUENCE OF 1-9</scope>
    <scope>ACETYLATION AT MET-1</scope>
    <source>
        <tissue>Platelet</tissue>
    </source>
</reference>
<reference key="4">
    <citation type="journal article" date="2011" name="BMC Syst. Biol.">
        <title>Initial characterization of the human central proteome.</title>
        <authorList>
            <person name="Burkard T.R."/>
            <person name="Planyavsky M."/>
            <person name="Kaupe I."/>
            <person name="Breitwieser F.P."/>
            <person name="Buerckstuemmer T."/>
            <person name="Bennett K.L."/>
            <person name="Superti-Furga G."/>
            <person name="Colinge J."/>
        </authorList>
    </citation>
    <scope>IDENTIFICATION BY MASS SPECTROMETRY [LARGE SCALE ANALYSIS]</scope>
</reference>
<reference key="5">
    <citation type="journal article" date="2012" name="Biochemistry">
        <title>Human glutaredoxin 3 forms [2Fe-2S]-bridged complexes with human BolA2.</title>
        <authorList>
            <person name="Li H."/>
            <person name="Mapolelo D.T."/>
            <person name="Randeniya S."/>
            <person name="Johnson M.K."/>
            <person name="Outten C.E."/>
        </authorList>
    </citation>
    <scope>INTERACTION WITH GLRX3</scope>
</reference>
<reference key="6">
    <citation type="journal article" date="2015" name="J. Am. Chem. Soc.">
        <title>Elucidating the molecular function of human BOLA2 in GRX3-dependent anamorsin maturation pathway.</title>
        <authorList>
            <person name="Banci L."/>
            <person name="Camponeschi F."/>
            <person name="Ciofi-Baffoni S."/>
            <person name="Muzzioli R."/>
        </authorList>
    </citation>
    <scope>FUNCTION</scope>
    <scope>INTERACTION WITH GLRX3</scope>
</reference>
<reference key="7">
    <citation type="journal article" date="2013" name="Antioxid. Redox Signal.">
        <title>BOLA1 is an aerobic protein that prevents mitochondrial morphology changes induced by glutathione depletion.</title>
        <authorList>
            <person name="Willems P."/>
            <person name="Wanschers B.F."/>
            <person name="Esseling J."/>
            <person name="Szklarczyk R."/>
            <person name="Kudla U."/>
            <person name="Duarte I."/>
            <person name="Forkink M."/>
            <person name="Nooteboom M."/>
            <person name="Swarts H."/>
            <person name="Gloerich J."/>
            <person name="Nijtmans L."/>
            <person name="Koopman W."/>
            <person name="Huynen M.A."/>
        </authorList>
    </citation>
    <scope>SUBCELLULAR LOCATION</scope>
</reference>
<reference key="8">
    <citation type="journal article" date="2016" name="J. Biol. Chem.">
        <title>A glutaredoxin-BolA complex serves as an iron-sulfur cluster chaperone for the cytosolic cluster assembly machinery.</title>
        <authorList>
            <person name="Frey A.G."/>
            <person name="Palenchar D.J."/>
            <person name="Wildemann J.D."/>
            <person name="Philpott C.C."/>
        </authorList>
    </citation>
    <scope>FUNCTION</scope>
    <scope>INTERACTION WITH GLRX3</scope>
</reference>
<protein>
    <recommendedName>
        <fullName>BolA-like protein 2</fullName>
    </recommendedName>
</protein>
<gene>
    <name type="primary">BOLA2</name>
    <name type="synonym">BOLA2A</name>
    <name type="ORF">My016</name>
</gene>
<gene>
    <name type="primary">BOLA2B</name>
</gene>
<evidence type="ECO:0000269" key="1">
    <source>
    </source>
</evidence>
<evidence type="ECO:0000269" key="2">
    <source>
    </source>
</evidence>
<evidence type="ECO:0000269" key="3">
    <source>
    </source>
</evidence>
<evidence type="ECO:0000269" key="4">
    <source>
    </source>
</evidence>
<evidence type="ECO:0000269" key="5">
    <source>
    </source>
</evidence>
<evidence type="ECO:0000303" key="6">
    <source>
    </source>
</evidence>
<evidence type="ECO:0000305" key="7"/>
<accession>Q9H3K6</accession>
<accession>A1L454</accession>
<accession>A7YDY3</accession>
<organism>
    <name type="scientific">Homo sapiens</name>
    <name type="common">Human</name>
    <dbReference type="NCBI Taxonomy" id="9606"/>
    <lineage>
        <taxon>Eukaryota</taxon>
        <taxon>Metazoa</taxon>
        <taxon>Chordata</taxon>
        <taxon>Craniata</taxon>
        <taxon>Vertebrata</taxon>
        <taxon>Euteleostomi</taxon>
        <taxon>Mammalia</taxon>
        <taxon>Eutheria</taxon>
        <taxon>Euarchontoglires</taxon>
        <taxon>Primates</taxon>
        <taxon>Haplorrhini</taxon>
        <taxon>Catarrhini</taxon>
        <taxon>Hominidae</taxon>
        <taxon>Homo</taxon>
    </lineage>
</organism>
<keyword id="KW-0007">Acetylation</keyword>
<keyword id="KW-0025">Alternative splicing</keyword>
<keyword id="KW-0963">Cytoplasm</keyword>
<keyword id="KW-0903">Direct protein sequencing</keyword>
<keyword id="KW-0539">Nucleus</keyword>
<keyword id="KW-1267">Proteomics identification</keyword>
<keyword id="KW-1185">Reference proteome</keyword>
<dbReference type="EMBL" id="AF060511">
    <property type="protein sequence ID" value="AAG43129.1"/>
    <property type="molecule type" value="mRNA"/>
</dbReference>
<dbReference type="EMBL" id="BC022832">
    <property type="protein sequence ID" value="AAH22832.1"/>
    <property type="status" value="ALT_INIT"/>
    <property type="molecule type" value="mRNA"/>
</dbReference>
<dbReference type="EMBL" id="BC062756">
    <property type="status" value="NOT_ANNOTATED_CDS"/>
    <property type="molecule type" value="mRNA"/>
</dbReference>
<dbReference type="EMBL" id="BC130401">
    <property type="protein sequence ID" value="AAI30402.1"/>
    <property type="status" value="ALT_INIT"/>
    <property type="molecule type" value="mRNA"/>
</dbReference>
<dbReference type="EMBL" id="BC130403">
    <property type="protein sequence ID" value="AAI30404.1"/>
    <property type="status" value="ALT_INIT"/>
    <property type="molecule type" value="mRNA"/>
</dbReference>
<dbReference type="EMBL" id="BC137532">
    <property type="protein sequence ID" value="AAI37533.1"/>
    <property type="status" value="ALT_INIT"/>
    <property type="molecule type" value="mRNA"/>
</dbReference>
<dbReference type="EMBL" id="BC137534">
    <property type="protein sequence ID" value="AAI37535.1"/>
    <property type="status" value="ALT_INIT"/>
    <property type="molecule type" value="mRNA"/>
</dbReference>
<dbReference type="EMBL" id="BC144688">
    <property type="protein sequence ID" value="AAI44689.1"/>
    <property type="status" value="ALT_INIT"/>
    <property type="molecule type" value="mRNA"/>
</dbReference>
<dbReference type="CCDS" id="CCDS32426.2">
    <molecule id="Q9H3K6-1"/>
</dbReference>
<dbReference type="CCDS" id="CCDS32430.2">
    <molecule id="Q9H3K6-1"/>
</dbReference>
<dbReference type="RefSeq" id="NP_001026997.2">
    <molecule id="Q9H3K6-1"/>
    <property type="nucleotide sequence ID" value="NM_001031827.3"/>
</dbReference>
<dbReference type="RefSeq" id="NP_001034271.1">
    <molecule id="Q9H3K6-1"/>
    <property type="nucleotide sequence ID" value="NM_001039182.2"/>
</dbReference>
<dbReference type="RefSeq" id="NP_001307508.1">
    <property type="nucleotide sequence ID" value="NM_001320579.1"/>
</dbReference>
<dbReference type="RefSeq" id="XP_016855107.1">
    <property type="nucleotide sequence ID" value="XM_016999618.1"/>
</dbReference>
<dbReference type="SMR" id="Q9H3K6"/>
<dbReference type="BioGRID" id="139268">
    <property type="interactions" value="126"/>
</dbReference>
<dbReference type="BioGRID" id="576388">
    <property type="interactions" value="59"/>
</dbReference>
<dbReference type="ComplexPortal" id="CPX-6861">
    <property type="entry name" value="BOLA2-GLRX3 iron-sulfur cluster assembly complex"/>
</dbReference>
<dbReference type="CORUM" id="Q9H3K6"/>
<dbReference type="FunCoup" id="Q9H3K6">
    <property type="interactions" value="499"/>
</dbReference>
<dbReference type="IntAct" id="Q9H3K6">
    <property type="interactions" value="44"/>
</dbReference>
<dbReference type="MINT" id="Q9H3K6"/>
<dbReference type="STRING" id="9606.ENSP00000306752"/>
<dbReference type="GlyGen" id="Q9H3K6">
    <property type="glycosylation" value="1 site, 1 O-linked glycan (1 site)"/>
</dbReference>
<dbReference type="iPTMnet" id="Q9H3K6"/>
<dbReference type="MetOSite" id="Q9H3K6"/>
<dbReference type="PhosphoSitePlus" id="Q9H3K6"/>
<dbReference type="BioMuta" id="BOLA2"/>
<dbReference type="DMDM" id="46577124"/>
<dbReference type="jPOST" id="Q9H3K6"/>
<dbReference type="MassIVE" id="Q9H3K6"/>
<dbReference type="PaxDb" id="9606-ENSP00000306752"/>
<dbReference type="PeptideAtlas" id="Q9H3K6"/>
<dbReference type="ProteomicsDB" id="80726">
    <molecule id="Q9H3K6-1"/>
</dbReference>
<dbReference type="ProteomicsDB" id="80727">
    <molecule id="Q9H3K6-2"/>
</dbReference>
<dbReference type="Pumba" id="Q9H3K6"/>
<dbReference type="TopDownProteomics" id="Q9H3K6-1">
    <molecule id="Q9H3K6-1"/>
</dbReference>
<dbReference type="Antibodypedia" id="66708">
    <property type="antibodies" value="65 antibodies from 12 providers"/>
</dbReference>
<dbReference type="Antibodypedia" id="68804">
    <property type="antibodies" value="9 antibodies from 3 providers"/>
</dbReference>
<dbReference type="DNASU" id="552900"/>
<dbReference type="Ensembl" id="ENST00000330978.4">
    <molecule id="Q9H3K6-1"/>
    <property type="protein sequence ID" value="ENSP00000331127.4"/>
    <property type="gene ID" value="ENSG00000183336.9"/>
</dbReference>
<dbReference type="Ensembl" id="ENST00000651894.2">
    <molecule id="Q9H3K6-1"/>
    <property type="protein sequence ID" value="ENSP00000498355.1"/>
    <property type="gene ID" value="ENSG00000169627.9"/>
</dbReference>
<dbReference type="GeneID" id="552900"/>
<dbReference type="GeneID" id="654483"/>
<dbReference type="KEGG" id="hsa:552900"/>
<dbReference type="KEGG" id="hsa:654483"/>
<dbReference type="MANE-Select" id="ENST00000330978.4">
    <property type="protein sequence ID" value="ENSP00000331127.4"/>
    <property type="RefSeq nucleotide sequence ID" value="NM_001031827.3"/>
    <property type="RefSeq protein sequence ID" value="NP_001026997.2"/>
</dbReference>
<dbReference type="MANE-Select" id="ENST00000651894.2">
    <property type="protein sequence ID" value="ENSP00000498355.1"/>
    <property type="RefSeq nucleotide sequence ID" value="NM_001039182.4"/>
    <property type="RefSeq protein sequence ID" value="NP_001034271.2"/>
</dbReference>
<dbReference type="UCSC" id="uc002dss.3">
    <molecule id="Q9H3K6-1"/>
    <property type="organism name" value="human"/>
</dbReference>
<dbReference type="AGR" id="HGNC:29488"/>
<dbReference type="AGR" id="HGNC:32479"/>
<dbReference type="CTD" id="552900"/>
<dbReference type="CTD" id="654483"/>
<dbReference type="DisGeNET" id="552900"/>
<dbReference type="GeneCards" id="BOLA2"/>
<dbReference type="GeneCards" id="BOLA2B"/>
<dbReference type="HGNC" id="HGNC:29488">
    <property type="gene designation" value="BOLA2"/>
</dbReference>
<dbReference type="HGNC" id="HGNC:32479">
    <property type="gene designation" value="BOLA2B"/>
</dbReference>
<dbReference type="HPA" id="ENSG00000169627">
    <property type="expression patterns" value="Low tissue specificity"/>
</dbReference>
<dbReference type="HPA" id="ENSG00000183336">
    <property type="expression patterns" value="Low tissue specificity"/>
</dbReference>
<dbReference type="MalaCards" id="BOLA2"/>
<dbReference type="MIM" id="613182">
    <property type="type" value="gene"/>
</dbReference>
<dbReference type="neXtProt" id="NX_Q9H3K6"/>
<dbReference type="OpenTargets" id="ENSG00000261740"/>
<dbReference type="PharmGKB" id="PA143485317"/>
<dbReference type="VEuPathDB" id="HostDB:ENSG00000169627"/>
<dbReference type="VEuPathDB" id="HostDB:ENSG00000183336"/>
<dbReference type="eggNOG" id="KOG0891">
    <property type="taxonomic scope" value="Eukaryota"/>
</dbReference>
<dbReference type="eggNOG" id="KOG3348">
    <property type="taxonomic scope" value="Eukaryota"/>
</dbReference>
<dbReference type="GeneTree" id="ENSGT00510000047760"/>
<dbReference type="HOGENOM" id="CLU_152301_0_0_1"/>
<dbReference type="InParanoid" id="Q9H3K6"/>
<dbReference type="OrthoDB" id="4983at2759"/>
<dbReference type="PAN-GO" id="Q9H3K6">
    <property type="GO annotations" value="4 GO annotations based on evolutionary models"/>
</dbReference>
<dbReference type="PhylomeDB" id="Q9H3K6"/>
<dbReference type="TreeFam" id="TF313141"/>
<dbReference type="PathwayCommons" id="Q9H3K6"/>
<dbReference type="Reactome" id="R-HSA-8950505">
    <property type="pathway name" value="Gene and protein expression by JAK-STAT signaling after Interleukin-12 stimulation"/>
</dbReference>
<dbReference type="SignaLink" id="Q9H3K6"/>
<dbReference type="BioGRID-ORCS" id="552900">
    <property type="hits" value="89 hits in 621 CRISPR screens"/>
</dbReference>
<dbReference type="BioGRID-ORCS" id="654483">
    <property type="hits" value="15 hits in 276 CRISPR screens"/>
</dbReference>
<dbReference type="ChiTaRS" id="BOLA2B">
    <property type="organism name" value="human"/>
</dbReference>
<dbReference type="Pharos" id="Q9H3K6">
    <property type="development level" value="Tbio"/>
</dbReference>
<dbReference type="PRO" id="PR:Q9H3K6"/>
<dbReference type="Proteomes" id="UP000005640">
    <property type="component" value="Chromosome 16"/>
</dbReference>
<dbReference type="RNAct" id="Q9H3K6">
    <property type="molecule type" value="protein"/>
</dbReference>
<dbReference type="Bgee" id="ENSG00000169627">
    <property type="expression patterns" value="Expressed in mucosa of transverse colon and 100 other cell types or tissues"/>
</dbReference>
<dbReference type="ExpressionAtlas" id="Q9H3K6">
    <property type="expression patterns" value="baseline and differential"/>
</dbReference>
<dbReference type="GO" id="GO:0005737">
    <property type="term" value="C:cytoplasm"/>
    <property type="evidence" value="ECO:0000314"/>
    <property type="project" value="UniProtKB"/>
</dbReference>
<dbReference type="GO" id="GO:0005829">
    <property type="term" value="C:cytosol"/>
    <property type="evidence" value="ECO:0000318"/>
    <property type="project" value="GO_Central"/>
</dbReference>
<dbReference type="GO" id="GO:1990229">
    <property type="term" value="C:iron-sulfur cluster assembly complex"/>
    <property type="evidence" value="ECO:0000353"/>
    <property type="project" value="ComplexPortal"/>
</dbReference>
<dbReference type="GO" id="GO:0005634">
    <property type="term" value="C:nucleus"/>
    <property type="evidence" value="ECO:0000314"/>
    <property type="project" value="UniProtKB"/>
</dbReference>
<dbReference type="GO" id="GO:0051537">
    <property type="term" value="F:2 iron, 2 sulfur cluster binding"/>
    <property type="evidence" value="ECO:0007669"/>
    <property type="project" value="InterPro"/>
</dbReference>
<dbReference type="GO" id="GO:0051536">
    <property type="term" value="F:iron-sulfur cluster binding"/>
    <property type="evidence" value="ECO:0000318"/>
    <property type="project" value="GO_Central"/>
</dbReference>
<dbReference type="GO" id="GO:0044571">
    <property type="term" value="P:[2Fe-2S] cluster assembly"/>
    <property type="evidence" value="ECO:0000314"/>
    <property type="project" value="UniProtKB"/>
</dbReference>
<dbReference type="GO" id="GO:0045454">
    <property type="term" value="P:cell redox homeostasis"/>
    <property type="evidence" value="ECO:0000314"/>
    <property type="project" value="ComplexPortal"/>
</dbReference>
<dbReference type="GO" id="GO:0006879">
    <property type="term" value="P:intracellular iron ion homeostasis"/>
    <property type="evidence" value="ECO:0000314"/>
    <property type="project" value="ComplexPortal"/>
</dbReference>
<dbReference type="GO" id="GO:0016226">
    <property type="term" value="P:iron-sulfur cluster assembly"/>
    <property type="evidence" value="ECO:0000314"/>
    <property type="project" value="ComplexPortal"/>
</dbReference>
<dbReference type="GO" id="GO:0051604">
    <property type="term" value="P:protein maturation"/>
    <property type="evidence" value="ECO:0007669"/>
    <property type="project" value="InterPro"/>
</dbReference>
<dbReference type="FunFam" id="3.10.20.90:FF:000308">
    <property type="entry name" value="bolA-like protein 2"/>
    <property type="match status" value="1"/>
</dbReference>
<dbReference type="Gene3D" id="3.10.20.90">
    <property type="entry name" value="Phosphatidylinositol 3-kinase Catalytic Subunit, Chain A, domain 1"/>
    <property type="match status" value="1"/>
</dbReference>
<dbReference type="InterPro" id="IPR045115">
    <property type="entry name" value="BOL2"/>
</dbReference>
<dbReference type="InterPro" id="IPR002634">
    <property type="entry name" value="BolA"/>
</dbReference>
<dbReference type="InterPro" id="IPR036065">
    <property type="entry name" value="BolA-like_sf"/>
</dbReference>
<dbReference type="PANTHER" id="PTHR12735:SF42">
    <property type="entry name" value="BOLA-LIKE PROTEIN 2"/>
    <property type="match status" value="1"/>
</dbReference>
<dbReference type="PANTHER" id="PTHR12735">
    <property type="entry name" value="BOLA-LIKE PROTEIN-RELATED"/>
    <property type="match status" value="1"/>
</dbReference>
<dbReference type="Pfam" id="PF01722">
    <property type="entry name" value="BolA"/>
    <property type="match status" value="1"/>
</dbReference>
<dbReference type="PIRSF" id="PIRSF003113">
    <property type="entry name" value="BolA"/>
    <property type="match status" value="1"/>
</dbReference>
<dbReference type="SUPFAM" id="SSF82657">
    <property type="entry name" value="BolA-like"/>
    <property type="match status" value="1"/>
</dbReference>
<comment type="function">
    <text evidence="4 5">Acts as a cytosolic iron-sulfur (Fe-S) cluster assembly factor that facilitates [2Fe-2S] cluster insertion into a subset of cytosolic proteins (PubMed:26613676, PubMed:27519415). Acts together with the monothiol glutaredoxin GLRX3 (PubMed:26613676, PubMed:27519415).</text>
</comment>
<comment type="subunit">
    <text evidence="2 4 5">Interacts with GLRX3; forms a heterotrimeric complex composed by two BOLA2 molecules and one GLRX3 molecule; linked by [2Fe-2S] clusters (PubMed:22309771, PubMed:26613676, PubMed:27519415).</text>
</comment>
<comment type="interaction">
    <interactant intactId="EBI-1642537">
        <id>Q9H3K6</id>
    </interactant>
    <interactant intactId="EBI-750511">
        <id>Q6FI81</id>
        <label>CIAPIN1</label>
    </interactant>
    <organismsDiffer>false</organismsDiffer>
    <experiments>2</experiments>
</comment>
<comment type="interaction">
    <interactant intactId="EBI-1642537">
        <id>Q9H3K6</id>
    </interactant>
    <interactant intactId="EBI-374781">
        <id>O76003</id>
        <label>GLRX3</label>
    </interactant>
    <organismsDiffer>false</organismsDiffer>
    <experiments>4</experiments>
</comment>
<comment type="subcellular location">
    <subcellularLocation>
        <location evidence="3">Cytoplasm</location>
    </subcellularLocation>
    <subcellularLocation>
        <location evidence="3">Nucleus</location>
    </subcellularLocation>
</comment>
<comment type="alternative products">
    <event type="alternative splicing"/>
    <isoform>
        <id>Q9H3K6-1</id>
        <name>1</name>
        <sequence type="displayed"/>
    </isoform>
    <isoform>
        <id>Q9H3K6-2</id>
        <name>2</name>
        <sequence type="described" ref="VSP_010092 VSP_010093"/>
    </isoform>
</comment>
<comment type="miscellaneous">
    <molecule>Isoform 2</molecule>
    <text evidence="7">May be produced at very low levels due to a premature stop codon in the mRNA, leading to nonsense-mediated mRNA decay.</text>
</comment>
<comment type="similarity">
    <text evidence="7">Belongs to the BolA/IbaG family.</text>
</comment>
<comment type="sequence caution" evidence="7">
    <conflict type="erroneous initiation">
        <sequence resource="EMBL-CDS" id="AAH22832"/>
    </conflict>
    <text>Extended N-terminus.</text>
</comment>
<comment type="sequence caution" evidence="7">
    <conflict type="erroneous initiation">
        <sequence resource="EMBL-CDS" id="AAI30402"/>
    </conflict>
    <text>Extended N-terminus.</text>
</comment>
<comment type="sequence caution" evidence="7">
    <conflict type="erroneous initiation">
        <sequence resource="EMBL-CDS" id="AAI30404"/>
    </conflict>
    <text>Extended N-terminus.</text>
</comment>
<comment type="sequence caution" evidence="7">
    <conflict type="erroneous initiation">
        <sequence resource="EMBL-CDS" id="AAI37533"/>
    </conflict>
    <text>Extended N-terminus.</text>
</comment>
<comment type="sequence caution" evidence="7">
    <conflict type="erroneous initiation">
        <sequence resource="EMBL-CDS" id="AAI37535"/>
    </conflict>
    <text>Extended N-terminus.</text>
</comment>
<comment type="sequence caution" evidence="7">
    <conflict type="erroneous initiation">
        <sequence resource="EMBL-CDS" id="AAI44689"/>
    </conflict>
    <text>Extended N-terminus.</text>
</comment>
<sequence length="86" mass="10117">MELSAEYLREKLQRDLEAEHVEVEDTTLNRCSCSFRVLVVSAKFEGKPLLQRHRLVNACLAEELPHIHAFEQKTLTPDQWARERQK</sequence>
<name>BOLA2_HUMAN</name>
<proteinExistence type="evidence at protein level"/>